<accession>Q6FK56</accession>
<evidence type="ECO:0000250" key="1"/>
<evidence type="ECO:0000255" key="2"/>
<evidence type="ECO:0000305" key="3"/>
<comment type="function">
    <text evidence="1">Required for cytoplasm to vacuole transport (Cvt) vesicle formation and efficient autophagy. Plays a role in ATG protein retrieval from the pre-autophagosomal structure (PAS) and is especially required for autophagy-dependent cycling of ATG9. Also plays a role in regulation of filamentous growth (By similarity).</text>
</comment>
<comment type="subcellular location">
    <subcellularLocation>
        <location evidence="1">Cytoplasm</location>
    </subcellularLocation>
    <subcellularLocation>
        <location evidence="1">Membrane</location>
        <topology evidence="1">Peripheral membrane protein</topology>
    </subcellularLocation>
</comment>
<comment type="similarity">
    <text evidence="3">Belongs to the ATG23 family.</text>
</comment>
<gene>
    <name type="primary">ATG23</name>
    <name type="ordered locus">CAGL0M00968g</name>
</gene>
<keyword id="KW-0072">Autophagy</keyword>
<keyword id="KW-0175">Coiled coil</keyword>
<keyword id="KW-0963">Cytoplasm</keyword>
<keyword id="KW-0472">Membrane</keyword>
<keyword id="KW-0653">Protein transport</keyword>
<keyword id="KW-1185">Reference proteome</keyword>
<keyword id="KW-0813">Transport</keyword>
<sequence>MLNDILVEVAEKTQLLESLIIPHERALTESDYSDQLENIRAEISATLNSLSNLNDLLISHDGPLRTEISSLMASKSKLKKINMKELTLLNEQETLETLRNDSSNLESSRPGFTTQQQQSITIASSYRHELQKYLDLVDVEKTSLNTNKLADNSKISKEDVENSDFNFNLKRYEKQQSILHSALTVNEIEIKKLETLLKEFRKDNNFIRDELKLINSNLKSHEDLISDELKQIDESRYAIMQSIGYSGRNEQQSSILDSIVKLSIKKPDIRTLIQERIEEYSNLLNFIDMKLNGLDQMLQEYKSRKSEWAEKSILWSQCLALISELEVTVRDQLSSAHTVGSEISPDQIKAQIKKFLTKLNKLLDESDLEDVVYSLVRNEVNSLNVALDEMNQMPQIKNDISDRESIHNPSFKLISKSPPKTGFSSENVSYKLNNTNIKKD</sequence>
<proteinExistence type="inferred from homology"/>
<organism>
    <name type="scientific">Candida glabrata (strain ATCC 2001 / BCRC 20586 / JCM 3761 / NBRC 0622 / NRRL Y-65 / CBS 138)</name>
    <name type="common">Yeast</name>
    <name type="synonym">Nakaseomyces glabratus</name>
    <dbReference type="NCBI Taxonomy" id="284593"/>
    <lineage>
        <taxon>Eukaryota</taxon>
        <taxon>Fungi</taxon>
        <taxon>Dikarya</taxon>
        <taxon>Ascomycota</taxon>
        <taxon>Saccharomycotina</taxon>
        <taxon>Saccharomycetes</taxon>
        <taxon>Saccharomycetales</taxon>
        <taxon>Saccharomycetaceae</taxon>
        <taxon>Nakaseomyces</taxon>
    </lineage>
</organism>
<name>ATG23_CANGA</name>
<protein>
    <recommendedName>
        <fullName>Autophagy-related protein 23</fullName>
    </recommendedName>
</protein>
<dbReference type="EMBL" id="CR380959">
    <property type="protein sequence ID" value="CAG62364.1"/>
    <property type="molecule type" value="Genomic_DNA"/>
</dbReference>
<dbReference type="RefSeq" id="XP_449388.1">
    <property type="nucleotide sequence ID" value="XM_449388.1"/>
</dbReference>
<dbReference type="SMR" id="Q6FK56"/>
<dbReference type="FunCoup" id="Q6FK56">
    <property type="interactions" value="122"/>
</dbReference>
<dbReference type="STRING" id="284593.Q6FK56"/>
<dbReference type="EnsemblFungi" id="CAGL0M00968g-T">
    <property type="protein sequence ID" value="CAGL0M00968g-T-p1"/>
    <property type="gene ID" value="CAGL0M00968g"/>
</dbReference>
<dbReference type="KEGG" id="cgr:2891157"/>
<dbReference type="CGD" id="CAL0137259">
    <property type="gene designation" value="CAGL0M00968g"/>
</dbReference>
<dbReference type="VEuPathDB" id="FungiDB:CAGL0M00968g"/>
<dbReference type="eggNOG" id="ENOG502RZQ0">
    <property type="taxonomic scope" value="Eukaryota"/>
</dbReference>
<dbReference type="HOGENOM" id="CLU_051067_0_0_1"/>
<dbReference type="InParanoid" id="Q6FK56"/>
<dbReference type="OMA" id="DLCRIND"/>
<dbReference type="Proteomes" id="UP000002428">
    <property type="component" value="Chromosome M"/>
</dbReference>
<dbReference type="GO" id="GO:0005737">
    <property type="term" value="C:cytoplasm"/>
    <property type="evidence" value="ECO:0007669"/>
    <property type="project" value="UniProtKB-SubCell"/>
</dbReference>
<dbReference type="GO" id="GO:0016020">
    <property type="term" value="C:membrane"/>
    <property type="evidence" value="ECO:0007669"/>
    <property type="project" value="UniProtKB-SubCell"/>
</dbReference>
<dbReference type="GO" id="GO:0006914">
    <property type="term" value="P:autophagy"/>
    <property type="evidence" value="ECO:0007669"/>
    <property type="project" value="UniProtKB-KW"/>
</dbReference>
<dbReference type="GO" id="GO:0015031">
    <property type="term" value="P:protein transport"/>
    <property type="evidence" value="ECO:0007669"/>
    <property type="project" value="UniProtKB-KW"/>
</dbReference>
<feature type="chain" id="PRO_0000064724" description="Autophagy-related protein 23">
    <location>
        <begin position="1"/>
        <end position="440"/>
    </location>
</feature>
<feature type="coiled-coil region" evidence="2">
    <location>
        <begin position="32"/>
        <end position="108"/>
    </location>
</feature>
<feature type="coiled-coil region" evidence="2">
    <location>
        <begin position="183"/>
        <end position="234"/>
    </location>
</feature>
<feature type="coiled-coil region" evidence="2">
    <location>
        <begin position="274"/>
        <end position="311"/>
    </location>
</feature>
<reference key="1">
    <citation type="journal article" date="2004" name="Nature">
        <title>Genome evolution in yeasts.</title>
        <authorList>
            <person name="Dujon B."/>
            <person name="Sherman D."/>
            <person name="Fischer G."/>
            <person name="Durrens P."/>
            <person name="Casaregola S."/>
            <person name="Lafontaine I."/>
            <person name="de Montigny J."/>
            <person name="Marck C."/>
            <person name="Neuveglise C."/>
            <person name="Talla E."/>
            <person name="Goffard N."/>
            <person name="Frangeul L."/>
            <person name="Aigle M."/>
            <person name="Anthouard V."/>
            <person name="Babour A."/>
            <person name="Barbe V."/>
            <person name="Barnay S."/>
            <person name="Blanchin S."/>
            <person name="Beckerich J.-M."/>
            <person name="Beyne E."/>
            <person name="Bleykasten C."/>
            <person name="Boisrame A."/>
            <person name="Boyer J."/>
            <person name="Cattolico L."/>
            <person name="Confanioleri F."/>
            <person name="de Daruvar A."/>
            <person name="Despons L."/>
            <person name="Fabre E."/>
            <person name="Fairhead C."/>
            <person name="Ferry-Dumazet H."/>
            <person name="Groppi A."/>
            <person name="Hantraye F."/>
            <person name="Hennequin C."/>
            <person name="Jauniaux N."/>
            <person name="Joyet P."/>
            <person name="Kachouri R."/>
            <person name="Kerrest A."/>
            <person name="Koszul R."/>
            <person name="Lemaire M."/>
            <person name="Lesur I."/>
            <person name="Ma L."/>
            <person name="Muller H."/>
            <person name="Nicaud J.-M."/>
            <person name="Nikolski M."/>
            <person name="Oztas S."/>
            <person name="Ozier-Kalogeropoulos O."/>
            <person name="Pellenz S."/>
            <person name="Potier S."/>
            <person name="Richard G.-F."/>
            <person name="Straub M.-L."/>
            <person name="Suleau A."/>
            <person name="Swennen D."/>
            <person name="Tekaia F."/>
            <person name="Wesolowski-Louvel M."/>
            <person name="Westhof E."/>
            <person name="Wirth B."/>
            <person name="Zeniou-Meyer M."/>
            <person name="Zivanovic Y."/>
            <person name="Bolotin-Fukuhara M."/>
            <person name="Thierry A."/>
            <person name="Bouchier C."/>
            <person name="Caudron B."/>
            <person name="Scarpelli C."/>
            <person name="Gaillardin C."/>
            <person name="Weissenbach J."/>
            <person name="Wincker P."/>
            <person name="Souciet J.-L."/>
        </authorList>
    </citation>
    <scope>NUCLEOTIDE SEQUENCE [LARGE SCALE GENOMIC DNA]</scope>
    <source>
        <strain>ATCC 2001 / BCRC 20586 / JCM 3761 / NBRC 0622 / NRRL Y-65 / CBS 138</strain>
    </source>
</reference>